<protein>
    <recommendedName>
        <fullName evidence="1">Ribosome maturation factor RimM</fullName>
    </recommendedName>
</protein>
<comment type="function">
    <text evidence="1">An accessory protein needed during the final step in the assembly of 30S ribosomal subunit, possibly for assembly of the head region. Essential for efficient processing of 16S rRNA. May be needed both before and after RbfA during the maturation of 16S rRNA. It has affinity for free ribosomal 30S subunits but not for 70S ribosomes.</text>
</comment>
<comment type="subunit">
    <text evidence="1">Binds ribosomal protein uS19.</text>
</comment>
<comment type="subcellular location">
    <subcellularLocation>
        <location evidence="1">Cytoplasm</location>
    </subcellularLocation>
</comment>
<comment type="domain">
    <text evidence="1">The PRC barrel domain binds ribosomal protein uS19.</text>
</comment>
<comment type="similarity">
    <text evidence="1">Belongs to the RimM family.</text>
</comment>
<organism>
    <name type="scientific">Burkholderia pseudomallei (strain 668)</name>
    <dbReference type="NCBI Taxonomy" id="320373"/>
    <lineage>
        <taxon>Bacteria</taxon>
        <taxon>Pseudomonadati</taxon>
        <taxon>Pseudomonadota</taxon>
        <taxon>Betaproteobacteria</taxon>
        <taxon>Burkholderiales</taxon>
        <taxon>Burkholderiaceae</taxon>
        <taxon>Burkholderia</taxon>
        <taxon>pseudomallei group</taxon>
    </lineage>
</organism>
<gene>
    <name evidence="1" type="primary">rimM</name>
    <name type="ordered locus">BURPS668_2858</name>
</gene>
<name>RIMM_BURP6</name>
<evidence type="ECO:0000255" key="1">
    <source>
        <dbReference type="HAMAP-Rule" id="MF_00014"/>
    </source>
</evidence>
<evidence type="ECO:0000256" key="2">
    <source>
        <dbReference type="SAM" id="MobiDB-lite"/>
    </source>
</evidence>
<keyword id="KW-0143">Chaperone</keyword>
<keyword id="KW-0963">Cytoplasm</keyword>
<keyword id="KW-0690">Ribosome biogenesis</keyword>
<keyword id="KW-0698">rRNA processing</keyword>
<dbReference type="EMBL" id="CP000570">
    <property type="protein sequence ID" value="ABN83605.1"/>
    <property type="molecule type" value="Genomic_DNA"/>
</dbReference>
<dbReference type="RefSeq" id="WP_011851985.1">
    <property type="nucleotide sequence ID" value="NC_009074.1"/>
</dbReference>
<dbReference type="SMR" id="A3NC06"/>
<dbReference type="KEGG" id="bpd:BURPS668_2858"/>
<dbReference type="HOGENOM" id="CLU_077636_1_0_4"/>
<dbReference type="GO" id="GO:0005737">
    <property type="term" value="C:cytoplasm"/>
    <property type="evidence" value="ECO:0007669"/>
    <property type="project" value="UniProtKB-SubCell"/>
</dbReference>
<dbReference type="GO" id="GO:0005840">
    <property type="term" value="C:ribosome"/>
    <property type="evidence" value="ECO:0007669"/>
    <property type="project" value="InterPro"/>
</dbReference>
<dbReference type="GO" id="GO:0043022">
    <property type="term" value="F:ribosome binding"/>
    <property type="evidence" value="ECO:0007669"/>
    <property type="project" value="InterPro"/>
</dbReference>
<dbReference type="GO" id="GO:0042274">
    <property type="term" value="P:ribosomal small subunit biogenesis"/>
    <property type="evidence" value="ECO:0007669"/>
    <property type="project" value="UniProtKB-UniRule"/>
</dbReference>
<dbReference type="GO" id="GO:0006364">
    <property type="term" value="P:rRNA processing"/>
    <property type="evidence" value="ECO:0007669"/>
    <property type="project" value="UniProtKB-UniRule"/>
</dbReference>
<dbReference type="Gene3D" id="2.30.30.240">
    <property type="entry name" value="PRC-barrel domain"/>
    <property type="match status" value="1"/>
</dbReference>
<dbReference type="Gene3D" id="2.40.30.60">
    <property type="entry name" value="RimM"/>
    <property type="match status" value="1"/>
</dbReference>
<dbReference type="HAMAP" id="MF_00014">
    <property type="entry name" value="Ribosome_mat_RimM"/>
    <property type="match status" value="1"/>
</dbReference>
<dbReference type="InterPro" id="IPR011033">
    <property type="entry name" value="PRC_barrel-like_sf"/>
</dbReference>
<dbReference type="InterPro" id="IPR056792">
    <property type="entry name" value="PRC_RimM"/>
</dbReference>
<dbReference type="InterPro" id="IPR011961">
    <property type="entry name" value="RimM"/>
</dbReference>
<dbReference type="InterPro" id="IPR002676">
    <property type="entry name" value="RimM_N"/>
</dbReference>
<dbReference type="InterPro" id="IPR036976">
    <property type="entry name" value="RimM_N_sf"/>
</dbReference>
<dbReference type="InterPro" id="IPR009000">
    <property type="entry name" value="Transl_B-barrel_sf"/>
</dbReference>
<dbReference type="NCBIfam" id="TIGR02273">
    <property type="entry name" value="16S_RimM"/>
    <property type="match status" value="1"/>
</dbReference>
<dbReference type="PANTHER" id="PTHR33692">
    <property type="entry name" value="RIBOSOME MATURATION FACTOR RIMM"/>
    <property type="match status" value="1"/>
</dbReference>
<dbReference type="PANTHER" id="PTHR33692:SF1">
    <property type="entry name" value="RIBOSOME MATURATION FACTOR RIMM"/>
    <property type="match status" value="1"/>
</dbReference>
<dbReference type="Pfam" id="PF24986">
    <property type="entry name" value="PRC_RimM"/>
    <property type="match status" value="1"/>
</dbReference>
<dbReference type="Pfam" id="PF01782">
    <property type="entry name" value="RimM"/>
    <property type="match status" value="1"/>
</dbReference>
<dbReference type="SUPFAM" id="SSF50346">
    <property type="entry name" value="PRC-barrel domain"/>
    <property type="match status" value="1"/>
</dbReference>
<dbReference type="SUPFAM" id="SSF50447">
    <property type="entry name" value="Translation proteins"/>
    <property type="match status" value="1"/>
</dbReference>
<reference key="1">
    <citation type="journal article" date="2010" name="Genome Biol. Evol.">
        <title>Continuing evolution of Burkholderia mallei through genome reduction and large-scale rearrangements.</title>
        <authorList>
            <person name="Losada L."/>
            <person name="Ronning C.M."/>
            <person name="DeShazer D."/>
            <person name="Woods D."/>
            <person name="Fedorova N."/>
            <person name="Kim H.S."/>
            <person name="Shabalina S.A."/>
            <person name="Pearson T.R."/>
            <person name="Brinkac L."/>
            <person name="Tan P."/>
            <person name="Nandi T."/>
            <person name="Crabtree J."/>
            <person name="Badger J."/>
            <person name="Beckstrom-Sternberg S."/>
            <person name="Saqib M."/>
            <person name="Schutzer S.E."/>
            <person name="Keim P."/>
            <person name="Nierman W.C."/>
        </authorList>
    </citation>
    <scope>NUCLEOTIDE SEQUENCE [LARGE SCALE GENOMIC DNA]</scope>
    <source>
        <strain>668</strain>
    </source>
</reference>
<proteinExistence type="inferred from homology"/>
<sequence length="229" mass="24480">MAGHDSGNAKRGRSPSFGVFVRKPVERTSAKGTSDGAVDSQAIRIDAAQSWPDDAVEVGAVVDAYGLKGWVKLAAHAGAGRGGDALLKARDWWLQKGAERKFARVTQAKLHGDTVVAHPDGSVDRDTALALRGARVFVRRGDFPALAADEFYWVDLIGLDVVNEAGVALGKIADMIDNGVHSIMRVEYPATGKDGRPKTGERLIPFVGVYVKAVEQAAGRVVVDWEADY</sequence>
<accession>A3NC06</accession>
<feature type="chain" id="PRO_0000351739" description="Ribosome maturation factor RimM">
    <location>
        <begin position="1"/>
        <end position="229"/>
    </location>
</feature>
<feature type="domain" description="PRC barrel" evidence="1">
    <location>
        <begin position="148"/>
        <end position="229"/>
    </location>
</feature>
<feature type="region of interest" description="Disordered" evidence="2">
    <location>
        <begin position="1"/>
        <end position="37"/>
    </location>
</feature>